<feature type="chain" id="PRO_0000357166" description="5-deoxyribose 1-phosphate isomerase">
    <location>
        <begin position="1"/>
        <end position="349"/>
    </location>
</feature>
<feature type="active site" description="Proton donor" evidence="1">
    <location>
        <position position="240"/>
    </location>
</feature>
<feature type="binding site" evidence="1">
    <location>
        <begin position="49"/>
        <end position="51"/>
    </location>
    <ligand>
        <name>substrate</name>
    </ligand>
</feature>
<feature type="binding site" evidence="1">
    <location>
        <position position="92"/>
    </location>
    <ligand>
        <name>substrate</name>
    </ligand>
</feature>
<feature type="binding site" evidence="1">
    <location>
        <position position="199"/>
    </location>
    <ligand>
        <name>substrate</name>
    </ligand>
</feature>
<feature type="binding site" evidence="1">
    <location>
        <begin position="250"/>
        <end position="251"/>
    </location>
    <ligand>
        <name>substrate</name>
    </ligand>
</feature>
<feature type="site" description="Transition state stabilizer" evidence="1">
    <location>
        <position position="160"/>
    </location>
</feature>
<sequence>MAELLAIKWDDNRDKLILLDQTILPNKIEYIEYDTAEGVYDSIKDMIVRGAPAIGVTAAYGLYFAAKVAPEDNFENFFKYLKEKSSYLDSSRPTAVNLSWALKVMESKALENKDKDVKEIKSILREEAKRIHEEDIEICKTIGENLITLLKDGMGILTHCNAGQLATSKYGTATSPMYLAKEKGWNFKVYSDETRPRLQGSTLTALELYEAGIDVTTITDNMAAMVMSQGKIDAVIVGCDRVAANGDTANKIGTMGVSILAKYFGIPMYIAAPTPSIDINTKTGEDIPIEERNPEEVTSRFGAWTAPKGVKVYNPGFDVTPHENITAIVTEKGIVYPPFKENLKKLFEK</sequence>
<dbReference type="EC" id="5.3.1.-" evidence="1"/>
<dbReference type="EMBL" id="CP000939">
    <property type="protein sequence ID" value="ACA44223.1"/>
    <property type="molecule type" value="Genomic_DNA"/>
</dbReference>
<dbReference type="RefSeq" id="WP_015957599.1">
    <property type="nucleotide sequence ID" value="NC_010516.1"/>
</dbReference>
<dbReference type="SMR" id="B1IJF0"/>
<dbReference type="KEGG" id="cbb:CLD_3299"/>
<dbReference type="HOGENOM" id="CLU_016218_1_2_9"/>
<dbReference type="Proteomes" id="UP000008541">
    <property type="component" value="Chromosome"/>
</dbReference>
<dbReference type="GO" id="GO:0046523">
    <property type="term" value="F:S-methyl-5-thioribose-1-phosphate isomerase activity"/>
    <property type="evidence" value="ECO:0007669"/>
    <property type="project" value="InterPro"/>
</dbReference>
<dbReference type="GO" id="GO:0019509">
    <property type="term" value="P:L-methionine salvage from methylthioadenosine"/>
    <property type="evidence" value="ECO:0007669"/>
    <property type="project" value="TreeGrafter"/>
</dbReference>
<dbReference type="GO" id="GO:0019323">
    <property type="term" value="P:pentose catabolic process"/>
    <property type="evidence" value="ECO:0007669"/>
    <property type="project" value="UniProtKB-UniRule"/>
</dbReference>
<dbReference type="FunFam" id="1.20.120.420:FF:000001">
    <property type="entry name" value="Methylthioribose-1-phosphate isomerase"/>
    <property type="match status" value="1"/>
</dbReference>
<dbReference type="FunFam" id="3.40.50.10470:FF:000006">
    <property type="entry name" value="Methylthioribose-1-phosphate isomerase"/>
    <property type="match status" value="1"/>
</dbReference>
<dbReference type="Gene3D" id="1.20.120.420">
    <property type="entry name" value="translation initiation factor eif-2b, domain 1"/>
    <property type="match status" value="1"/>
</dbReference>
<dbReference type="Gene3D" id="3.40.50.10470">
    <property type="entry name" value="Translation initiation factor eif-2b, domain 2"/>
    <property type="match status" value="1"/>
</dbReference>
<dbReference type="HAMAP" id="MF_02229">
    <property type="entry name" value="Deoxyribose1P_isomerase"/>
    <property type="match status" value="1"/>
</dbReference>
<dbReference type="HAMAP" id="MF_01678">
    <property type="entry name" value="Salvage_MtnA"/>
    <property type="match status" value="1"/>
</dbReference>
<dbReference type="InterPro" id="IPR043679">
    <property type="entry name" value="Deoxyribose1P_isomerase_DrdI"/>
</dbReference>
<dbReference type="InterPro" id="IPR000649">
    <property type="entry name" value="IF-2B-related"/>
</dbReference>
<dbReference type="InterPro" id="IPR005251">
    <property type="entry name" value="IF-M1Pi"/>
</dbReference>
<dbReference type="InterPro" id="IPR042529">
    <property type="entry name" value="IF_2B-like_C"/>
</dbReference>
<dbReference type="InterPro" id="IPR011559">
    <property type="entry name" value="Initiation_fac_2B_a/b/d"/>
</dbReference>
<dbReference type="InterPro" id="IPR027363">
    <property type="entry name" value="M1Pi_N"/>
</dbReference>
<dbReference type="InterPro" id="IPR037171">
    <property type="entry name" value="NagB/RpiA_transferase-like"/>
</dbReference>
<dbReference type="NCBIfam" id="TIGR00524">
    <property type="entry name" value="eIF-2B_rel"/>
    <property type="match status" value="1"/>
</dbReference>
<dbReference type="NCBIfam" id="NF004326">
    <property type="entry name" value="PRK05720.1"/>
    <property type="match status" value="1"/>
</dbReference>
<dbReference type="NCBIfam" id="TIGR00512">
    <property type="entry name" value="salvage_mtnA"/>
    <property type="match status" value="1"/>
</dbReference>
<dbReference type="PANTHER" id="PTHR43475">
    <property type="entry name" value="METHYLTHIORIBOSE-1-PHOSPHATE ISOMERASE"/>
    <property type="match status" value="1"/>
</dbReference>
<dbReference type="PANTHER" id="PTHR43475:SF1">
    <property type="entry name" value="METHYLTHIORIBOSE-1-PHOSPHATE ISOMERASE"/>
    <property type="match status" value="1"/>
</dbReference>
<dbReference type="Pfam" id="PF01008">
    <property type="entry name" value="IF-2B"/>
    <property type="match status" value="1"/>
</dbReference>
<dbReference type="SUPFAM" id="SSF100950">
    <property type="entry name" value="NagB/RpiA/CoA transferase-like"/>
    <property type="match status" value="1"/>
</dbReference>
<keyword id="KW-0119">Carbohydrate metabolism</keyword>
<keyword id="KW-0413">Isomerase</keyword>
<protein>
    <recommendedName>
        <fullName evidence="1">5-deoxyribose 1-phosphate isomerase</fullName>
        <ecNumber evidence="1">5.3.1.-</ecNumber>
    </recommendedName>
</protein>
<organism>
    <name type="scientific">Clostridium botulinum (strain Okra / Type B1)</name>
    <dbReference type="NCBI Taxonomy" id="498213"/>
    <lineage>
        <taxon>Bacteria</taxon>
        <taxon>Bacillati</taxon>
        <taxon>Bacillota</taxon>
        <taxon>Clostridia</taxon>
        <taxon>Eubacteriales</taxon>
        <taxon>Clostridiaceae</taxon>
        <taxon>Clostridium</taxon>
    </lineage>
</organism>
<reference key="1">
    <citation type="journal article" date="2007" name="PLoS ONE">
        <title>Analysis of the neurotoxin complex genes in Clostridium botulinum A1-A4 and B1 strains: BoNT/A3, /Ba4 and /B1 clusters are located within plasmids.</title>
        <authorList>
            <person name="Smith T.J."/>
            <person name="Hill K.K."/>
            <person name="Foley B.T."/>
            <person name="Detter J.C."/>
            <person name="Munk A.C."/>
            <person name="Bruce D.C."/>
            <person name="Doggett N.A."/>
            <person name="Smith L.A."/>
            <person name="Marks J.D."/>
            <person name="Xie G."/>
            <person name="Brettin T.S."/>
        </authorList>
    </citation>
    <scope>NUCLEOTIDE SEQUENCE [LARGE SCALE GENOMIC DNA]</scope>
    <source>
        <strain>Okra / Type B1</strain>
    </source>
</reference>
<proteinExistence type="inferred from homology"/>
<accession>B1IJF0</accession>
<name>DRDI_CLOBK</name>
<evidence type="ECO:0000255" key="1">
    <source>
        <dbReference type="HAMAP-Rule" id="MF_02229"/>
    </source>
</evidence>
<comment type="function">
    <text evidence="1">Catalyzes the isomerization of 5-deoxy-alpha-D-ribose 1-phosphate to 5-deoxy-D-ribulose 1-phosphate, as part of a 5-deoxyribose salvage pathway that recycles this toxic radical SAM enzyme by-product to mainstream metabolites.</text>
</comment>
<comment type="catalytic activity">
    <reaction evidence="1">
        <text>5-deoxy-alpha-D-ribose 1-phosphate = 5-deoxy-D-ribulose 1-phosphate</text>
        <dbReference type="Rhea" id="RHEA:61296"/>
        <dbReference type="ChEBI" id="CHEBI:58749"/>
        <dbReference type="ChEBI" id="CHEBI:144504"/>
    </reaction>
    <physiologicalReaction direction="left-to-right" evidence="1">
        <dbReference type="Rhea" id="RHEA:61297"/>
    </physiologicalReaction>
</comment>
<comment type="pathway">
    <text evidence="1">Carbohydrate degradation.</text>
</comment>
<comment type="similarity">
    <text evidence="1">Belongs to the EIF-2B alpha/beta/delta subunits family. DrdI subfamily.</text>
</comment>
<gene>
    <name evidence="1" type="primary">drdI</name>
    <name type="ordered locus">CLD_3299</name>
</gene>